<feature type="chain" id="PRO_0000127226" description="Helix-loop-helix protein 4">
    <location>
        <begin position="1"/>
        <end position="205"/>
    </location>
</feature>
<feature type="domain" description="bHLH" evidence="1">
    <location>
        <begin position="3"/>
        <end position="56"/>
    </location>
</feature>
<feature type="region of interest" description="Basic motif" evidence="1">
    <location>
        <begin position="3"/>
        <end position="16"/>
    </location>
</feature>
<feature type="region of interest" description="Helix-loop-helix motif" evidence="1">
    <location>
        <begin position="17"/>
        <end position="56"/>
    </location>
</feature>
<accession>P34555</accession>
<sequence length="205" mass="22692">MPMVVAKRNARERTRVHTVNQAFLVLKQHLPSLRQFTKRVSKLRILNAAITYIDTLLKLIQSSEAVPQSVISATLGPIVPTPVRAVHKISKPDTVISQPIRPLAPVLPRHETYLPAPIAATCAPDHSLVDYRSTFASSLAPPVPMQMPSVFSPQPTFPYMKSLLDYPTYFYQPSTAPPPPPAPTAPQSHLIVNNQLVPMPSYQCF</sequence>
<comment type="function">
    <text evidence="2 3">Acts as a transcriptional regulator (PubMed:27487365, PubMed:29672507). May mediate transcriptional activation by binding to the E-box motif 5'-CANNTG-3' (PubMed:29672507). Required for the correct morphology, terminal identity and function of the ADL sensory neurons by controlling the expression of the ADL-specific gene repertoire, including chemoreceptor encoding genes, ion channel encoding genes, neuropeptides and the neurotransmitter eat-4 (PubMed:29672507). Regulates the expression of the srh-234 chemoreceptor encoding gene in the ADL neurons under feeding conditions (PubMed:27487365). Plays a role in the chemorepulsive response toward ascaroside pheromones mediated by the ADL sensory neurons (PubMed:29672507).</text>
</comment>
<comment type="subcellular location">
    <subcellularLocation>
        <location evidence="1">Nucleus</location>
    </subcellularLocation>
</comment>
<comment type="tissue specificity">
    <text evidence="2 3">Expressed in the ADL sensory neurons.</text>
</comment>
<comment type="developmental stage">
    <text evidence="2 3">Expressed in the ADL precursor cells in the precomma stage embryo (PubMed:29672507). Expressed during embryogenesis, larval stages and in adult animals (PubMed:27487365, PubMed:29672507).</text>
</comment>
<comment type="disruption phenotype">
    <text evidence="2">RNAi-mediated knockdown in a rrf-3 RNAi hypersensitive mutant background leads to decreased expression of srh-234 in the cell body of ADL sensory neurons (PubMed:27487365).</text>
</comment>
<keyword id="KW-0238">DNA-binding</keyword>
<keyword id="KW-0539">Nucleus</keyword>
<keyword id="KW-1185">Reference proteome</keyword>
<keyword id="KW-0804">Transcription</keyword>
<keyword id="KW-0805">Transcription regulation</keyword>
<reference key="1">
    <citation type="journal article" date="1994" name="Nature">
        <title>2.2 Mb of contiguous nucleotide sequence from chromosome III of C. elegans.</title>
        <authorList>
            <person name="Wilson R."/>
            <person name="Ainscough R."/>
            <person name="Anderson K."/>
            <person name="Baynes C."/>
            <person name="Berks M."/>
            <person name="Bonfield J."/>
            <person name="Burton J."/>
            <person name="Connell M."/>
            <person name="Copsey T."/>
            <person name="Cooper J."/>
            <person name="Coulson A."/>
            <person name="Craxton M."/>
            <person name="Dear S."/>
            <person name="Du Z."/>
            <person name="Durbin R."/>
            <person name="Favello A."/>
            <person name="Fraser A."/>
            <person name="Fulton L."/>
            <person name="Gardner A."/>
            <person name="Green P."/>
            <person name="Hawkins T."/>
            <person name="Hillier L."/>
            <person name="Jier M."/>
            <person name="Johnston L."/>
            <person name="Jones M."/>
            <person name="Kershaw J."/>
            <person name="Kirsten J."/>
            <person name="Laisster N."/>
            <person name="Latreille P."/>
            <person name="Lightning J."/>
            <person name="Lloyd C."/>
            <person name="Mortimore B."/>
            <person name="O'Callaghan M."/>
            <person name="Parsons J."/>
            <person name="Percy C."/>
            <person name="Rifken L."/>
            <person name="Roopra A."/>
            <person name="Saunders D."/>
            <person name="Shownkeen R."/>
            <person name="Sims M."/>
            <person name="Smaldon N."/>
            <person name="Smith A."/>
            <person name="Smith M."/>
            <person name="Sonnhammer E."/>
            <person name="Staden R."/>
            <person name="Sulston J."/>
            <person name="Thierry-Mieg J."/>
            <person name="Thomas K."/>
            <person name="Vaudin M."/>
            <person name="Vaughan K."/>
            <person name="Waterston R."/>
            <person name="Watson A."/>
            <person name="Weinstock L."/>
            <person name="Wilkinson-Sproat J."/>
            <person name="Wohldman P."/>
        </authorList>
    </citation>
    <scope>NUCLEOTIDE SEQUENCE [LARGE SCALE GENOMIC DNA]</scope>
    <source>
        <strain>Bristol N2</strain>
    </source>
</reference>
<reference key="2">
    <citation type="journal article" date="1998" name="Science">
        <title>Genome sequence of the nematode C. elegans: a platform for investigating biology.</title>
        <authorList>
            <consortium name="The C. elegans sequencing consortium"/>
        </authorList>
    </citation>
    <scope>NUCLEOTIDE SEQUENCE [LARGE SCALE GENOMIC DNA]</scope>
    <source>
        <strain>Bristol N2</strain>
    </source>
</reference>
<reference key="3">
    <citation type="journal article" date="2016" name="PLoS Genet.">
        <title>Cell-Autonomous and Non-Cell-Autonomous Regulation of a Feeding State-Dependent Chemoreceptor Gene via MEF-2 and bHLH Transcription Factors.</title>
        <authorList>
            <person name="Gruner M."/>
            <person name="Grubbs J."/>
            <person name="McDonagh A."/>
            <person name="Valdes D."/>
            <person name="Winbush A."/>
            <person name="van der Linden A.M."/>
        </authorList>
    </citation>
    <scope>FUNCTION</scope>
    <scope>TISSUE SPECIFICITY</scope>
    <scope>DEVELOPMENTAL STAGE</scope>
    <scope>DISRUPTION PHENOTYPE</scope>
</reference>
<reference key="4">
    <citation type="journal article" date="2018" name="PLoS Biol.">
        <title>Unconventional function of an Achaete-Scute homolog as a terminal selector of nociceptive neuron identity.</title>
        <authorList>
            <person name="Masoudi N."/>
            <person name="Tavazoie S."/>
            <person name="Glenwinkel L."/>
            <person name="Ryu L."/>
            <person name="Kim K."/>
            <person name="Hobert O."/>
        </authorList>
    </citation>
    <scope>FUNCTION</scope>
    <scope>TISSUE SPECIFICITY</scope>
    <scope>DEVELOPMENTAL STAGE</scope>
</reference>
<proteinExistence type="evidence at transcript level"/>
<organism>
    <name type="scientific">Caenorhabditis elegans</name>
    <dbReference type="NCBI Taxonomy" id="6239"/>
    <lineage>
        <taxon>Eukaryota</taxon>
        <taxon>Metazoa</taxon>
        <taxon>Ecdysozoa</taxon>
        <taxon>Nematoda</taxon>
        <taxon>Chromadorea</taxon>
        <taxon>Rhabditida</taxon>
        <taxon>Rhabditina</taxon>
        <taxon>Rhabditomorpha</taxon>
        <taxon>Rhabditoidea</taxon>
        <taxon>Rhabditidae</taxon>
        <taxon>Peloderinae</taxon>
        <taxon>Caenorhabditis</taxon>
    </lineage>
</organism>
<protein>
    <recommendedName>
        <fullName>Helix-loop-helix protein 4</fullName>
    </recommendedName>
</protein>
<gene>
    <name type="primary">hlh-4</name>
    <name type="ORF">T05G5.2</name>
</gene>
<name>HLH4_CAEEL</name>
<dbReference type="EMBL" id="Z27079">
    <property type="protein sequence ID" value="CAA81589.1"/>
    <property type="molecule type" value="Genomic_DNA"/>
</dbReference>
<dbReference type="PIR" id="S41002">
    <property type="entry name" value="S41002"/>
</dbReference>
<dbReference type="RefSeq" id="NP_001379052.1">
    <property type="nucleotide sequence ID" value="NM_001392180.1"/>
</dbReference>
<dbReference type="RefSeq" id="NP_499150.1">
    <property type="nucleotide sequence ID" value="NM_066749.1"/>
</dbReference>
<dbReference type="SMR" id="P34555"/>
<dbReference type="BioGRID" id="41567">
    <property type="interactions" value="3"/>
</dbReference>
<dbReference type="FunCoup" id="P34555">
    <property type="interactions" value="143"/>
</dbReference>
<dbReference type="IntAct" id="P34555">
    <property type="interactions" value="3"/>
</dbReference>
<dbReference type="STRING" id="6239.T05G5.2.1"/>
<dbReference type="PaxDb" id="6239-T05G5.2"/>
<dbReference type="EnsemblMetazoa" id="T05G5.2.1">
    <property type="protein sequence ID" value="T05G5.2.1"/>
    <property type="gene ID" value="WBGene00001951"/>
</dbReference>
<dbReference type="EnsemblMetazoa" id="T05G5.2.2">
    <property type="protein sequence ID" value="T05G5.2.2"/>
    <property type="gene ID" value="WBGene00001951"/>
</dbReference>
<dbReference type="GeneID" id="176372"/>
<dbReference type="UCSC" id="T05G5.2">
    <property type="organism name" value="c. elegans"/>
</dbReference>
<dbReference type="AGR" id="WB:WBGene00001951"/>
<dbReference type="WormBase" id="T05G5.2">
    <property type="protein sequence ID" value="CE00314"/>
    <property type="gene ID" value="WBGene00001951"/>
    <property type="gene designation" value="hlh-4"/>
</dbReference>
<dbReference type="eggNOG" id="KOG4029">
    <property type="taxonomic scope" value="Eukaryota"/>
</dbReference>
<dbReference type="HOGENOM" id="CLU_1349975_0_0_1"/>
<dbReference type="InParanoid" id="P34555"/>
<dbReference type="OMA" id="QFTKRVS"/>
<dbReference type="OrthoDB" id="6241467at2759"/>
<dbReference type="PRO" id="PR:P34555"/>
<dbReference type="Proteomes" id="UP000001940">
    <property type="component" value="Chromosome III"/>
</dbReference>
<dbReference type="Bgee" id="WBGene00001951">
    <property type="expression patterns" value="Expressed in pharyngeal muscle cell (C elegans) and 3 other cell types or tissues"/>
</dbReference>
<dbReference type="GO" id="GO:0005634">
    <property type="term" value="C:nucleus"/>
    <property type="evidence" value="ECO:0000250"/>
    <property type="project" value="WormBase"/>
</dbReference>
<dbReference type="GO" id="GO:0090575">
    <property type="term" value="C:RNA polymerase II transcription regulator complex"/>
    <property type="evidence" value="ECO:0000353"/>
    <property type="project" value="WormBase"/>
</dbReference>
<dbReference type="GO" id="GO:0043425">
    <property type="term" value="F:bHLH transcription factor binding"/>
    <property type="evidence" value="ECO:0000353"/>
    <property type="project" value="WormBase"/>
</dbReference>
<dbReference type="GO" id="GO:0000981">
    <property type="term" value="F:DNA-binding transcription factor activity, RNA polymerase II-specific"/>
    <property type="evidence" value="ECO:0000314"/>
    <property type="project" value="WormBase"/>
</dbReference>
<dbReference type="GO" id="GO:0046983">
    <property type="term" value="F:protein dimerization activity"/>
    <property type="evidence" value="ECO:0007669"/>
    <property type="project" value="InterPro"/>
</dbReference>
<dbReference type="GO" id="GO:0000978">
    <property type="term" value="F:RNA polymerase II cis-regulatory region sequence-specific DNA binding"/>
    <property type="evidence" value="ECO:0000315"/>
    <property type="project" value="UniProtKB"/>
</dbReference>
<dbReference type="GO" id="GO:0000977">
    <property type="term" value="F:RNA polymerase II transcription regulatory region sequence-specific DNA binding"/>
    <property type="evidence" value="ECO:0000318"/>
    <property type="project" value="GO_Central"/>
</dbReference>
<dbReference type="GO" id="GO:0045944">
    <property type="term" value="P:positive regulation of transcription by RNA polymerase II"/>
    <property type="evidence" value="ECO:0000315"/>
    <property type="project" value="UniProtKB"/>
</dbReference>
<dbReference type="GO" id="GO:0006357">
    <property type="term" value="P:regulation of transcription by RNA polymerase II"/>
    <property type="evidence" value="ECO:0000314"/>
    <property type="project" value="WormBase"/>
</dbReference>
<dbReference type="GO" id="GO:0032094">
    <property type="term" value="P:response to food"/>
    <property type="evidence" value="ECO:0000315"/>
    <property type="project" value="UniProtKB"/>
</dbReference>
<dbReference type="CDD" id="cd11418">
    <property type="entry name" value="bHLH_TS_ASCL"/>
    <property type="match status" value="1"/>
</dbReference>
<dbReference type="FunFam" id="4.10.280.10:FF:000052">
    <property type="entry name" value="Protein atonal homolog 8"/>
    <property type="match status" value="1"/>
</dbReference>
<dbReference type="Gene3D" id="4.10.280.10">
    <property type="entry name" value="Helix-loop-helix DNA-binding domain"/>
    <property type="match status" value="1"/>
</dbReference>
<dbReference type="InterPro" id="IPR011598">
    <property type="entry name" value="bHLH_dom"/>
</dbReference>
<dbReference type="InterPro" id="IPR050283">
    <property type="entry name" value="E-box_TF_Regulators"/>
</dbReference>
<dbReference type="InterPro" id="IPR036638">
    <property type="entry name" value="HLH_DNA-bd_sf"/>
</dbReference>
<dbReference type="PANTHER" id="PTHR23349">
    <property type="entry name" value="BASIC HELIX-LOOP-HELIX TRANSCRIPTION FACTOR, TWIST"/>
    <property type="match status" value="1"/>
</dbReference>
<dbReference type="PANTHER" id="PTHR23349:SF108">
    <property type="entry name" value="BHLH DOMAIN-CONTAINING PROTEIN"/>
    <property type="match status" value="1"/>
</dbReference>
<dbReference type="Pfam" id="PF00010">
    <property type="entry name" value="HLH"/>
    <property type="match status" value="1"/>
</dbReference>
<dbReference type="SMART" id="SM00353">
    <property type="entry name" value="HLH"/>
    <property type="match status" value="1"/>
</dbReference>
<dbReference type="SUPFAM" id="SSF47459">
    <property type="entry name" value="HLH, helix-loop-helix DNA-binding domain"/>
    <property type="match status" value="1"/>
</dbReference>
<dbReference type="PROSITE" id="PS50888">
    <property type="entry name" value="BHLH"/>
    <property type="match status" value="1"/>
</dbReference>
<evidence type="ECO:0000255" key="1">
    <source>
        <dbReference type="PROSITE-ProRule" id="PRU00981"/>
    </source>
</evidence>
<evidence type="ECO:0000269" key="2">
    <source>
    </source>
</evidence>
<evidence type="ECO:0000269" key="3">
    <source>
    </source>
</evidence>